<name>P35_MALP2</name>
<dbReference type="EMBL" id="BA000026">
    <property type="protein sequence ID" value="BAC44473.1"/>
    <property type="molecule type" value="Genomic_DNA"/>
</dbReference>
<dbReference type="RefSeq" id="WP_011077503.1">
    <property type="nucleotide sequence ID" value="NC_004432.1"/>
</dbReference>
<dbReference type="STRING" id="272633.gene:10731802"/>
<dbReference type="KEGG" id="mpe:MYPE6810"/>
<dbReference type="eggNOG" id="ENOG5031ZBZ">
    <property type="taxonomic scope" value="Bacteria"/>
</dbReference>
<dbReference type="HOGENOM" id="CLU_040028_0_0_14"/>
<dbReference type="InParanoid" id="P0DJ00"/>
<dbReference type="Proteomes" id="UP000002522">
    <property type="component" value="Chromosome"/>
</dbReference>
<dbReference type="GO" id="GO:0005886">
    <property type="term" value="C:plasma membrane"/>
    <property type="evidence" value="ECO:0007669"/>
    <property type="project" value="UniProtKB-SubCell"/>
</dbReference>
<dbReference type="InterPro" id="IPR011653">
    <property type="entry name" value="Lipoprotein_p35"/>
</dbReference>
<dbReference type="Pfam" id="PF07668">
    <property type="entry name" value="MpPF1"/>
    <property type="match status" value="1"/>
</dbReference>
<dbReference type="PROSITE" id="PS51257">
    <property type="entry name" value="PROKAR_LIPOPROTEIN"/>
    <property type="match status" value="1"/>
</dbReference>
<protein>
    <recommendedName>
        <fullName>Lipoprotein p35</fullName>
    </recommendedName>
</protein>
<organism>
    <name type="scientific">Malacoplasma penetrans (strain HF-2)</name>
    <name type="common">Mycoplasma penetrans</name>
    <dbReference type="NCBI Taxonomy" id="272633"/>
    <lineage>
        <taxon>Bacteria</taxon>
        <taxon>Bacillati</taxon>
        <taxon>Mycoplasmatota</taxon>
        <taxon>Mycoplasmoidales</taxon>
        <taxon>Mycoplasmoidaceae</taxon>
        <taxon>Malacoplasma</taxon>
    </lineage>
</organism>
<proteinExistence type="inferred from homology"/>
<sequence length="362" mass="38370">MKIKKIKLLKALALTGAFGIVATVPVIVSSCSSTSENNGNGNGNGGTDGNTQQTEVTPAIKSEVSLTGALSKIYDTKTGTDRETTSQLIVKDIKANPENYFTNGEALKDVIASATVTVDGGFTESTFTGEAYSVWSAKADVKKGTYSQASKQLDIKSINDLQTVLGDSAAIKGICDLIPNLKLNNGTDYKVTNNGLSLSEDLLHINVTAKDGQTDVSMDLAIPVSDLNLKIDGLKISVSGTGIKTSELTTNYKFNIGIDNTVKTLTPAAVTLAEADRTNAEKVLEKLGYATVSGSTYTLDQDKLADALGLYNCKFEAVKSEKDSTNNNKYTVTLKATPNDGYFWEDGTNGAKEDISFVATFS</sequence>
<reference key="1">
    <citation type="journal article" date="2002" name="Nucleic Acids Res.">
        <title>The complete genomic sequence of Mycoplasma penetrans, an intracellular bacterial pathogen in humans.</title>
        <authorList>
            <person name="Sasaki Y."/>
            <person name="Ishikawa J."/>
            <person name="Yamashita A."/>
            <person name="Oshima K."/>
            <person name="Kenri T."/>
            <person name="Furuya K."/>
            <person name="Yoshino C."/>
            <person name="Horino A."/>
            <person name="Shiba T."/>
            <person name="Sasaki T."/>
            <person name="Hattori M."/>
        </authorList>
    </citation>
    <scope>NUCLEOTIDE SEQUENCE [LARGE SCALE GENOMIC DNA]</scope>
    <source>
        <strain>HF-2</strain>
    </source>
</reference>
<keyword id="KW-1003">Cell membrane</keyword>
<keyword id="KW-0449">Lipoprotein</keyword>
<keyword id="KW-0472">Membrane</keyword>
<keyword id="KW-0564">Palmitate</keyword>
<keyword id="KW-1185">Reference proteome</keyword>
<keyword id="KW-0732">Signal</keyword>
<accession>P0DJ00</accession>
<accession>Q50367</accession>
<comment type="function">
    <text evidence="1">Major M.penetrans antigen.</text>
</comment>
<comment type="subcellular location">
    <subcellularLocation>
        <location evidence="2">Cell membrane</location>
        <topology evidence="2">Lipid-anchor</topology>
        <orientation evidence="1">Extracellular side</orientation>
    </subcellularLocation>
    <text evidence="1">Distributed all over the plasma membrane.</text>
</comment>
<comment type="PTM">
    <text evidence="1">The N-terminus is blocked.</text>
</comment>
<comment type="miscellaneous">
    <text evidence="1">The dominant B-epitopes are found at the N- and C-terminal regions.</text>
</comment>
<comment type="similarity">
    <text evidence="4">Belongs to the p35 lipoprotein family.</text>
</comment>
<feature type="signal peptide" evidence="4">
    <location>
        <begin position="1"/>
        <end position="30"/>
    </location>
</feature>
<feature type="chain" id="PRO_0000018093" description="Lipoprotein p35">
    <location>
        <begin position="31"/>
        <end position="362"/>
    </location>
</feature>
<feature type="region of interest" description="Disordered" evidence="3">
    <location>
        <begin position="33"/>
        <end position="53"/>
    </location>
</feature>
<feature type="lipid moiety-binding region" description="N-palmitoyl cysteine" evidence="4">
    <location>
        <position position="31"/>
    </location>
</feature>
<feature type="lipid moiety-binding region" description="S-diacylglycerol cysteine" evidence="4">
    <location>
        <position position="31"/>
    </location>
</feature>
<gene>
    <name type="ordered locus">MYPE6810</name>
</gene>
<evidence type="ECO:0000250" key="1"/>
<evidence type="ECO:0000255" key="2">
    <source>
        <dbReference type="PROSITE-ProRule" id="PRU00303"/>
    </source>
</evidence>
<evidence type="ECO:0000256" key="3">
    <source>
        <dbReference type="SAM" id="MobiDB-lite"/>
    </source>
</evidence>
<evidence type="ECO:0000305" key="4"/>